<sequence>MTPVGTITNSANVYKVPSLRKVPEIGPVSVESVRQRMRGNTDAVDQAVNKKAMSFEQTLLRAFDQVNQKQQKTAELTEQMIVDPESVDVHDVTVAMAEASMSLKIAQTVIDKVLKSWNDVTTAR</sequence>
<comment type="subcellular location">
    <subcellularLocation>
        <location evidence="1">Bacterial flagellum basal body</location>
    </subcellularLocation>
</comment>
<comment type="similarity">
    <text evidence="1">Belongs to the FliE family.</text>
</comment>
<accession>B2S2Z5</accession>
<name>FLIE_TREPS</name>
<keyword id="KW-0975">Bacterial flagellum</keyword>
<gene>
    <name evidence="1" type="primary">fliE</name>
    <name type="ordered locus">TPASS_0398</name>
</gene>
<proteinExistence type="inferred from homology"/>
<organism>
    <name type="scientific">Treponema pallidum subsp. pallidum (strain SS14)</name>
    <dbReference type="NCBI Taxonomy" id="455434"/>
    <lineage>
        <taxon>Bacteria</taxon>
        <taxon>Pseudomonadati</taxon>
        <taxon>Spirochaetota</taxon>
        <taxon>Spirochaetia</taxon>
        <taxon>Spirochaetales</taxon>
        <taxon>Treponemataceae</taxon>
        <taxon>Treponema</taxon>
    </lineage>
</organism>
<dbReference type="EMBL" id="CP000805">
    <property type="protein sequence ID" value="ACD70824.1"/>
    <property type="molecule type" value="Genomic_DNA"/>
</dbReference>
<dbReference type="RefSeq" id="WP_010881846.1">
    <property type="nucleotide sequence ID" value="NC_021508.1"/>
</dbReference>
<dbReference type="SMR" id="B2S2Z5"/>
<dbReference type="GeneID" id="93876172"/>
<dbReference type="KEGG" id="tpp:TPASS_0398"/>
<dbReference type="PATRIC" id="fig|455434.6.peg.400"/>
<dbReference type="Proteomes" id="UP000001202">
    <property type="component" value="Chromosome"/>
</dbReference>
<dbReference type="GO" id="GO:0009425">
    <property type="term" value="C:bacterial-type flagellum basal body"/>
    <property type="evidence" value="ECO:0007669"/>
    <property type="project" value="UniProtKB-SubCell"/>
</dbReference>
<dbReference type="GO" id="GO:0003774">
    <property type="term" value="F:cytoskeletal motor activity"/>
    <property type="evidence" value="ECO:0007669"/>
    <property type="project" value="InterPro"/>
</dbReference>
<dbReference type="GO" id="GO:0005198">
    <property type="term" value="F:structural molecule activity"/>
    <property type="evidence" value="ECO:0007669"/>
    <property type="project" value="InterPro"/>
</dbReference>
<dbReference type="GO" id="GO:0071973">
    <property type="term" value="P:bacterial-type flagellum-dependent cell motility"/>
    <property type="evidence" value="ECO:0007669"/>
    <property type="project" value="InterPro"/>
</dbReference>
<dbReference type="HAMAP" id="MF_00724">
    <property type="entry name" value="FliE"/>
    <property type="match status" value="1"/>
</dbReference>
<dbReference type="InterPro" id="IPR001624">
    <property type="entry name" value="FliE"/>
</dbReference>
<dbReference type="NCBIfam" id="TIGR00205">
    <property type="entry name" value="fliE"/>
    <property type="match status" value="1"/>
</dbReference>
<dbReference type="PANTHER" id="PTHR34653">
    <property type="match status" value="1"/>
</dbReference>
<dbReference type="PANTHER" id="PTHR34653:SF1">
    <property type="entry name" value="FLAGELLAR HOOK-BASAL BODY COMPLEX PROTEIN FLIE"/>
    <property type="match status" value="1"/>
</dbReference>
<dbReference type="Pfam" id="PF02049">
    <property type="entry name" value="FliE"/>
    <property type="match status" value="1"/>
</dbReference>
<dbReference type="PRINTS" id="PR01006">
    <property type="entry name" value="FLGHOOKFLIE"/>
</dbReference>
<feature type="chain" id="PRO_1000132677" description="Flagellar hook-basal body complex protein FliE">
    <location>
        <begin position="1"/>
        <end position="124"/>
    </location>
</feature>
<reference key="1">
    <citation type="journal article" date="2008" name="BMC Microbiol.">
        <title>Complete genome sequence of Treponema pallidum ssp. pallidum strain SS14 determined with oligonucleotide arrays.</title>
        <authorList>
            <person name="Matejkova P."/>
            <person name="Strouhal M."/>
            <person name="Smajs D."/>
            <person name="Norris S.J."/>
            <person name="Palzkill T."/>
            <person name="Petrosino J.F."/>
            <person name="Sodergren E."/>
            <person name="Norton J.E."/>
            <person name="Singh J."/>
            <person name="Richmond T.A."/>
            <person name="Molla M.N."/>
            <person name="Albert T.J."/>
            <person name="Weinstock G.M."/>
        </authorList>
    </citation>
    <scope>NUCLEOTIDE SEQUENCE [LARGE SCALE GENOMIC DNA]</scope>
    <source>
        <strain>SS14</strain>
    </source>
</reference>
<protein>
    <recommendedName>
        <fullName evidence="1">Flagellar hook-basal body complex protein FliE</fullName>
    </recommendedName>
</protein>
<evidence type="ECO:0000255" key="1">
    <source>
        <dbReference type="HAMAP-Rule" id="MF_00724"/>
    </source>
</evidence>